<feature type="chain" id="PRO_1000100330" description="Putative competence-damage inducible protein">
    <location>
        <begin position="1"/>
        <end position="406"/>
    </location>
</feature>
<proteinExistence type="inferred from homology"/>
<reference key="1">
    <citation type="submission" date="2008-04" db="EMBL/GenBank/DDBJ databases">
        <title>Complete sequence of chromosome of Natranaerobius thermophilus JW/NM-WN-LF.</title>
        <authorList>
            <consortium name="US DOE Joint Genome Institute"/>
            <person name="Copeland A."/>
            <person name="Lucas S."/>
            <person name="Lapidus A."/>
            <person name="Glavina del Rio T."/>
            <person name="Dalin E."/>
            <person name="Tice H."/>
            <person name="Bruce D."/>
            <person name="Goodwin L."/>
            <person name="Pitluck S."/>
            <person name="Chertkov O."/>
            <person name="Brettin T."/>
            <person name="Detter J.C."/>
            <person name="Han C."/>
            <person name="Kuske C.R."/>
            <person name="Schmutz J."/>
            <person name="Larimer F."/>
            <person name="Land M."/>
            <person name="Hauser L."/>
            <person name="Kyrpides N."/>
            <person name="Lykidis A."/>
            <person name="Mesbah N.M."/>
            <person name="Wiegel J."/>
        </authorList>
    </citation>
    <scope>NUCLEOTIDE SEQUENCE [LARGE SCALE GENOMIC DNA]</scope>
    <source>
        <strain>ATCC BAA-1301 / DSM 18059 / JW/NM-WN-LF</strain>
    </source>
</reference>
<sequence>MIGEIISVGDELLEGHVLNTNSQYLSQQLFQIGINVKYQQTIGDDFDSLVSAFNNSLNRSDVIILTGGLGPTRDDITKEAVSRSLNLNLLLDENEYQRIKSFFDHLQKRMSENNKKQAYIPEGAEVLINQIGTAPGIFIEQEDKIVAMLPGPPREMKTVFLNELKPRLIKNITAEGYYKSSIIKLIGIGESQVDEIIKEIKIPNCEIVPLALRHQVHLILKSYSQNQITAEEQLKRLENMLQHKLSSFIWGRDDDKLEEIVVNTLKDKGLSLAVAESMTGGLIAGKLTDVSGASNVFHGGVVAYTEDAKLNSLTVSQKVLEKYSHVSEETSYELAKQIREKFNTDIGLGITGYAGPEGERVGLFHTVIVGSTGKRHLSRILPGGRTDIKKGAVIQSLNELRKFLSD</sequence>
<dbReference type="EMBL" id="CP001034">
    <property type="protein sequence ID" value="ACB85054.1"/>
    <property type="molecule type" value="Genomic_DNA"/>
</dbReference>
<dbReference type="RefSeq" id="WP_012447926.1">
    <property type="nucleotide sequence ID" value="NC_010718.1"/>
</dbReference>
<dbReference type="SMR" id="B2A3C4"/>
<dbReference type="FunCoup" id="B2A3C4">
    <property type="interactions" value="159"/>
</dbReference>
<dbReference type="STRING" id="457570.Nther_1471"/>
<dbReference type="KEGG" id="nth:Nther_1471"/>
<dbReference type="eggNOG" id="COG1058">
    <property type="taxonomic scope" value="Bacteria"/>
</dbReference>
<dbReference type="eggNOG" id="COG1546">
    <property type="taxonomic scope" value="Bacteria"/>
</dbReference>
<dbReference type="HOGENOM" id="CLU_030805_9_3_9"/>
<dbReference type="InParanoid" id="B2A3C4"/>
<dbReference type="OrthoDB" id="9801454at2"/>
<dbReference type="Proteomes" id="UP000001683">
    <property type="component" value="Chromosome"/>
</dbReference>
<dbReference type="CDD" id="cd00885">
    <property type="entry name" value="cinA"/>
    <property type="match status" value="1"/>
</dbReference>
<dbReference type="Gene3D" id="3.30.70.2860">
    <property type="match status" value="1"/>
</dbReference>
<dbReference type="Gene3D" id="3.90.950.20">
    <property type="entry name" value="CinA-like"/>
    <property type="match status" value="1"/>
</dbReference>
<dbReference type="Gene3D" id="3.40.980.10">
    <property type="entry name" value="MoaB/Mog-like domain"/>
    <property type="match status" value="1"/>
</dbReference>
<dbReference type="HAMAP" id="MF_00226_B">
    <property type="entry name" value="CinA_B"/>
    <property type="match status" value="1"/>
</dbReference>
<dbReference type="InterPro" id="IPR050101">
    <property type="entry name" value="CinA"/>
</dbReference>
<dbReference type="InterPro" id="IPR036653">
    <property type="entry name" value="CinA-like_C"/>
</dbReference>
<dbReference type="InterPro" id="IPR008136">
    <property type="entry name" value="CinA_C"/>
</dbReference>
<dbReference type="InterPro" id="IPR041424">
    <property type="entry name" value="CinA_KH"/>
</dbReference>
<dbReference type="InterPro" id="IPR008135">
    <property type="entry name" value="Competence-induced_CinA"/>
</dbReference>
<dbReference type="InterPro" id="IPR036425">
    <property type="entry name" value="MoaB/Mog-like_dom_sf"/>
</dbReference>
<dbReference type="InterPro" id="IPR001453">
    <property type="entry name" value="MoaB/Mog_dom"/>
</dbReference>
<dbReference type="NCBIfam" id="TIGR00200">
    <property type="entry name" value="cinA_nterm"/>
    <property type="match status" value="1"/>
</dbReference>
<dbReference type="NCBIfam" id="TIGR00177">
    <property type="entry name" value="molyb_syn"/>
    <property type="match status" value="1"/>
</dbReference>
<dbReference type="NCBIfam" id="TIGR00199">
    <property type="entry name" value="PncC_domain"/>
    <property type="match status" value="1"/>
</dbReference>
<dbReference type="NCBIfam" id="NF001813">
    <property type="entry name" value="PRK00549.1"/>
    <property type="match status" value="1"/>
</dbReference>
<dbReference type="PANTHER" id="PTHR13939">
    <property type="entry name" value="NICOTINAMIDE-NUCLEOTIDE AMIDOHYDROLASE PNCC"/>
    <property type="match status" value="1"/>
</dbReference>
<dbReference type="PANTHER" id="PTHR13939:SF0">
    <property type="entry name" value="NMN AMIDOHYDROLASE-LIKE PROTEIN YFAY"/>
    <property type="match status" value="1"/>
</dbReference>
<dbReference type="Pfam" id="PF02464">
    <property type="entry name" value="CinA"/>
    <property type="match status" value="1"/>
</dbReference>
<dbReference type="Pfam" id="PF18146">
    <property type="entry name" value="CinA_KH"/>
    <property type="match status" value="1"/>
</dbReference>
<dbReference type="Pfam" id="PF00994">
    <property type="entry name" value="MoCF_biosynth"/>
    <property type="match status" value="1"/>
</dbReference>
<dbReference type="PIRSF" id="PIRSF006728">
    <property type="entry name" value="CinA"/>
    <property type="match status" value="1"/>
</dbReference>
<dbReference type="SMART" id="SM00852">
    <property type="entry name" value="MoCF_biosynth"/>
    <property type="match status" value="1"/>
</dbReference>
<dbReference type="SUPFAM" id="SSF142433">
    <property type="entry name" value="CinA-like"/>
    <property type="match status" value="1"/>
</dbReference>
<dbReference type="SUPFAM" id="SSF53218">
    <property type="entry name" value="Molybdenum cofactor biosynthesis proteins"/>
    <property type="match status" value="1"/>
</dbReference>
<name>CINA_NATTJ</name>
<comment type="similarity">
    <text evidence="1">Belongs to the CinA family.</text>
</comment>
<organism>
    <name type="scientific">Natranaerobius thermophilus (strain ATCC BAA-1301 / DSM 18059 / JW/NM-WN-LF)</name>
    <dbReference type="NCBI Taxonomy" id="457570"/>
    <lineage>
        <taxon>Bacteria</taxon>
        <taxon>Bacillati</taxon>
        <taxon>Bacillota</taxon>
        <taxon>Clostridia</taxon>
        <taxon>Natranaerobiales</taxon>
        <taxon>Natranaerobiaceae</taxon>
        <taxon>Natranaerobius</taxon>
    </lineage>
</organism>
<evidence type="ECO:0000255" key="1">
    <source>
        <dbReference type="HAMAP-Rule" id="MF_00226"/>
    </source>
</evidence>
<gene>
    <name evidence="1" type="primary">cinA</name>
    <name type="ordered locus">Nther_1471</name>
</gene>
<protein>
    <recommendedName>
        <fullName evidence="1">Putative competence-damage inducible protein</fullName>
    </recommendedName>
</protein>
<accession>B2A3C4</accession>
<keyword id="KW-1185">Reference proteome</keyword>